<comment type="function">
    <text evidence="1">Envelope protein required for virus entry into host cell and for cell-cell fusion (syncytium formation).</text>
</comment>
<comment type="subcellular location">
    <subcellularLocation>
        <location evidence="3">Virion membrane</location>
        <topology evidence="3">Single-pass type II membrane protein</topology>
    </subcellularLocation>
    <text evidence="1">Component of the intracellular mature virion (IMV) membrane.</text>
</comment>
<comment type="PTM">
    <text evidence="1">Contains two intramolecular disulfide bonds. They are created by the viral disulfide bond formation pathway, a poxvirus-specific pathway that operates on the cytoplasmic side of the MV membranes (By similarity).</text>
</comment>
<comment type="similarity">
    <text evidence="3">Belongs to the poxviridae A28 protein family.</text>
</comment>
<comment type="sequence caution" evidence="3">
    <conflict type="erroneous initiation">
        <sequence resource="EMBL-CDS" id="AAA42382"/>
    </conflict>
    <text>Extended N-terminus.</text>
</comment>
<comment type="sequence caution" evidence="3">
    <conflict type="erroneous initiation">
        <sequence resource="EMBL-CDS" id="AAG02892"/>
    </conflict>
    <text>Extended N-terminus.</text>
</comment>
<organismHost>
    <name type="scientific">Amsacta</name>
    <dbReference type="NCBI Taxonomy" id="340055"/>
</organismHost>
<sequence length="143" mass="16602">MNTVQILVVILITTALSFLVFQLWYYAENYEYILRYNDTYSNLQFARSANINFDDLTVFDPNDNVFNVEEKWRCASTNNNIFYAVSTFGFLSTESTGINLTYTNSRDCIIDLFSRIIKIVYDPCTVETSNDCRLLRLLMANTS</sequence>
<keyword id="KW-1015">Disulfide bond</keyword>
<keyword id="KW-1168">Fusion of virus membrane with host membrane</keyword>
<keyword id="KW-0426">Late protein</keyword>
<keyword id="KW-0472">Membrane</keyword>
<keyword id="KW-1185">Reference proteome</keyword>
<keyword id="KW-0735">Signal-anchor</keyword>
<keyword id="KW-0812">Transmembrane</keyword>
<keyword id="KW-1133">Transmembrane helix</keyword>
<keyword id="KW-0261">Viral envelope protein</keyword>
<keyword id="KW-1162">Viral penetration into host cytoplasm</keyword>
<keyword id="KW-0946">Virion</keyword>
<keyword id="KW-1160">Virus entry into host cell</keyword>
<name>A28_AMEPV</name>
<accession>P29816</accession>
<accession>Q9EML8</accession>
<reference key="1">
    <citation type="journal article" date="1991" name="J. Virol.">
        <title>Identification, cloning, and sequencing of a fragment of Amsacta moorei entomopoxvirus DNA containing the spheroidin gene and three vaccinia virus-related open reading frames.</title>
        <authorList>
            <person name="Hall R.L."/>
            <person name="Moyer R.W."/>
        </authorList>
    </citation>
    <scope>NUCLEOTIDE SEQUENCE [GENOMIC DNA]</scope>
</reference>
<reference key="2">
    <citation type="journal article" date="2000" name="Virology">
        <title>Complete genomic sequence of the Amsacta moorei entomopoxvirus: analysis and comparison with other poxviruses.</title>
        <authorList>
            <person name="Bawden A.L."/>
            <person name="Glassberg K.J."/>
            <person name="Diggans J."/>
            <person name="Shaw R."/>
            <person name="Farmerie W."/>
            <person name="Moyer R.W."/>
        </authorList>
    </citation>
    <scope>NUCLEOTIDE SEQUENCE [LARGE SCALE GENOMIC DNA]</scope>
</reference>
<feature type="chain" id="PRO_0000099304" description="Envelope protein A28 homolog">
    <location>
        <begin position="1"/>
        <end position="143"/>
    </location>
</feature>
<feature type="transmembrane region" description="Helical; Signal-anchor for type II membrane protein" evidence="2">
    <location>
        <begin position="1"/>
        <end position="21"/>
    </location>
</feature>
<feature type="topological domain" description="Virion surface" evidence="2">
    <location>
        <begin position="22"/>
        <end position="143"/>
    </location>
</feature>
<protein>
    <recommendedName>
        <fullName>Envelope protein A28 homolog</fullName>
    </recommendedName>
    <alternativeName>
        <fullName>Protein G4R</fullName>
    </alternativeName>
</protein>
<organism>
    <name type="scientific">Amsacta moorei entomopoxvirus</name>
    <name type="common">AmEPV</name>
    <dbReference type="NCBI Taxonomy" id="28321"/>
    <lineage>
        <taxon>Viruses</taxon>
        <taxon>Varidnaviria</taxon>
        <taxon>Bamfordvirae</taxon>
        <taxon>Nucleocytoviricota</taxon>
        <taxon>Pokkesviricetes</taxon>
        <taxon>Chitovirales</taxon>
        <taxon>Poxviridae</taxon>
        <taxon>Entomopoxvirinae</taxon>
        <taxon>Betaentomopoxvirus</taxon>
    </lineage>
</organism>
<dbReference type="EMBL" id="M77182">
    <property type="protein sequence ID" value="AAA42382.1"/>
    <property type="status" value="ALT_INIT"/>
    <property type="molecule type" value="Genomic_DNA"/>
</dbReference>
<dbReference type="EMBL" id="AF250284">
    <property type="protein sequence ID" value="AAG02892.1"/>
    <property type="status" value="ALT_INIT"/>
    <property type="molecule type" value="Genomic_DNA"/>
</dbReference>
<dbReference type="PIR" id="D41561">
    <property type="entry name" value="WMVZG4"/>
</dbReference>
<dbReference type="RefSeq" id="NP_064968.2">
    <property type="nucleotide sequence ID" value="NC_002520.1"/>
</dbReference>
<dbReference type="SMR" id="P29816"/>
<dbReference type="GeneID" id="1494776"/>
<dbReference type="KEGG" id="vg:1494776"/>
<dbReference type="OrthoDB" id="17447at10239"/>
<dbReference type="Proteomes" id="UP000000872">
    <property type="component" value="Genome"/>
</dbReference>
<dbReference type="GO" id="GO:0016020">
    <property type="term" value="C:membrane"/>
    <property type="evidence" value="ECO:0007669"/>
    <property type="project" value="UniProtKB-KW"/>
</dbReference>
<dbReference type="GO" id="GO:0019031">
    <property type="term" value="C:viral envelope"/>
    <property type="evidence" value="ECO:0007669"/>
    <property type="project" value="UniProtKB-KW"/>
</dbReference>
<dbReference type="GO" id="GO:0055036">
    <property type="term" value="C:virion membrane"/>
    <property type="evidence" value="ECO:0007669"/>
    <property type="project" value="UniProtKB-SubCell"/>
</dbReference>
<dbReference type="GO" id="GO:0039663">
    <property type="term" value="P:membrane fusion involved in viral entry into host cell"/>
    <property type="evidence" value="ECO:0007669"/>
    <property type="project" value="UniProtKB-KW"/>
</dbReference>
<dbReference type="GO" id="GO:0046718">
    <property type="term" value="P:symbiont entry into host cell"/>
    <property type="evidence" value="ECO:0007669"/>
    <property type="project" value="UniProtKB-KW"/>
</dbReference>
<dbReference type="InterPro" id="IPR007664">
    <property type="entry name" value="Poxvirus_A28"/>
</dbReference>
<dbReference type="Pfam" id="PF04584">
    <property type="entry name" value="Pox_A28"/>
    <property type="match status" value="1"/>
</dbReference>
<gene>
    <name type="ordered locus">AMV186</name>
    <name type="ORF">G4</name>
</gene>
<proteinExistence type="inferred from homology"/>
<evidence type="ECO:0000250" key="1"/>
<evidence type="ECO:0000255" key="2"/>
<evidence type="ECO:0000305" key="3"/>